<name>5NT1B_HUMAN</name>
<proteinExistence type="evidence at protein level"/>
<gene>
    <name type="primary">NT5C1B</name>
    <name type="synonym">AIRP</name>
    <name type="ORF">FKSG85</name>
</gene>
<reference key="1">
    <citation type="submission" date="2001-03" db="EMBL/GenBank/DDBJ databases">
        <title>Isolation of a novel human testis cDNA encoding a polypeptide related to autoimmune infertility.</title>
        <authorList>
            <person name="Setiady Y.Y."/>
            <person name="Pujianto D.A."/>
            <person name="Ekowati A.L."/>
            <person name="Harahap A."/>
            <person name="Marzuki S."/>
        </authorList>
    </citation>
    <scope>NUCLEOTIDE SEQUENCE [MRNA] (ISOFORM 2)</scope>
    <source>
        <tissue>Testis</tissue>
    </source>
</reference>
<reference key="2">
    <citation type="submission" date="2001-09" db="EMBL/GenBank/DDBJ databases">
        <title>Homo sapiens cytosolic nucleotidase Ib alpha mRNA.</title>
        <authorList>
            <person name="Ji Y."/>
            <person name="Mitchell B.S."/>
            <person name="Spychala J."/>
        </authorList>
    </citation>
    <scope>NUCLEOTIDE SEQUENCE [MRNA] (ISOFORM 1)</scope>
    <source>
        <tissue>Testis</tissue>
    </source>
</reference>
<reference key="3">
    <citation type="journal article" date="2004" name="Nat. Genet.">
        <title>Complete sequencing and characterization of 21,243 full-length human cDNAs.</title>
        <authorList>
            <person name="Ota T."/>
            <person name="Suzuki Y."/>
            <person name="Nishikawa T."/>
            <person name="Otsuki T."/>
            <person name="Sugiyama T."/>
            <person name="Irie R."/>
            <person name="Wakamatsu A."/>
            <person name="Hayashi K."/>
            <person name="Sato H."/>
            <person name="Nagai K."/>
            <person name="Kimura K."/>
            <person name="Makita H."/>
            <person name="Sekine M."/>
            <person name="Obayashi M."/>
            <person name="Nishi T."/>
            <person name="Shibahara T."/>
            <person name="Tanaka T."/>
            <person name="Ishii S."/>
            <person name="Yamamoto J."/>
            <person name="Saito K."/>
            <person name="Kawai Y."/>
            <person name="Isono Y."/>
            <person name="Nakamura Y."/>
            <person name="Nagahari K."/>
            <person name="Murakami K."/>
            <person name="Yasuda T."/>
            <person name="Iwayanagi T."/>
            <person name="Wagatsuma M."/>
            <person name="Shiratori A."/>
            <person name="Sudo H."/>
            <person name="Hosoiri T."/>
            <person name="Kaku Y."/>
            <person name="Kodaira H."/>
            <person name="Kondo H."/>
            <person name="Sugawara M."/>
            <person name="Takahashi M."/>
            <person name="Kanda K."/>
            <person name="Yokoi T."/>
            <person name="Furuya T."/>
            <person name="Kikkawa E."/>
            <person name="Omura Y."/>
            <person name="Abe K."/>
            <person name="Kamihara K."/>
            <person name="Katsuta N."/>
            <person name="Sato K."/>
            <person name="Tanikawa M."/>
            <person name="Yamazaki M."/>
            <person name="Ninomiya K."/>
            <person name="Ishibashi T."/>
            <person name="Yamashita H."/>
            <person name="Murakawa K."/>
            <person name="Fujimori K."/>
            <person name="Tanai H."/>
            <person name="Kimata M."/>
            <person name="Watanabe M."/>
            <person name="Hiraoka S."/>
            <person name="Chiba Y."/>
            <person name="Ishida S."/>
            <person name="Ono Y."/>
            <person name="Takiguchi S."/>
            <person name="Watanabe S."/>
            <person name="Yosida M."/>
            <person name="Hotuta T."/>
            <person name="Kusano J."/>
            <person name="Kanehori K."/>
            <person name="Takahashi-Fujii A."/>
            <person name="Hara H."/>
            <person name="Tanase T.-O."/>
            <person name="Nomura Y."/>
            <person name="Togiya S."/>
            <person name="Komai F."/>
            <person name="Hara R."/>
            <person name="Takeuchi K."/>
            <person name="Arita M."/>
            <person name="Imose N."/>
            <person name="Musashino K."/>
            <person name="Yuuki H."/>
            <person name="Oshima A."/>
            <person name="Sasaki N."/>
            <person name="Aotsuka S."/>
            <person name="Yoshikawa Y."/>
            <person name="Matsunawa H."/>
            <person name="Ichihara T."/>
            <person name="Shiohata N."/>
            <person name="Sano S."/>
            <person name="Moriya S."/>
            <person name="Momiyama H."/>
            <person name="Satoh N."/>
            <person name="Takami S."/>
            <person name="Terashima Y."/>
            <person name="Suzuki O."/>
            <person name="Nakagawa S."/>
            <person name="Senoh A."/>
            <person name="Mizoguchi H."/>
            <person name="Goto Y."/>
            <person name="Shimizu F."/>
            <person name="Wakebe H."/>
            <person name="Hishigaki H."/>
            <person name="Watanabe T."/>
            <person name="Sugiyama A."/>
            <person name="Takemoto M."/>
            <person name="Kawakami B."/>
            <person name="Yamazaki M."/>
            <person name="Watanabe K."/>
            <person name="Kumagai A."/>
            <person name="Itakura S."/>
            <person name="Fukuzumi Y."/>
            <person name="Fujimori Y."/>
            <person name="Komiyama M."/>
            <person name="Tashiro H."/>
            <person name="Tanigami A."/>
            <person name="Fujiwara T."/>
            <person name="Ono T."/>
            <person name="Yamada K."/>
            <person name="Fujii Y."/>
            <person name="Ozaki K."/>
            <person name="Hirao M."/>
            <person name="Ohmori Y."/>
            <person name="Kawabata A."/>
            <person name="Hikiji T."/>
            <person name="Kobatake N."/>
            <person name="Inagaki H."/>
            <person name="Ikema Y."/>
            <person name="Okamoto S."/>
            <person name="Okitani R."/>
            <person name="Kawakami T."/>
            <person name="Noguchi S."/>
            <person name="Itoh T."/>
            <person name="Shigeta K."/>
            <person name="Senba T."/>
            <person name="Matsumura K."/>
            <person name="Nakajima Y."/>
            <person name="Mizuno T."/>
            <person name="Morinaga M."/>
            <person name="Sasaki M."/>
            <person name="Togashi T."/>
            <person name="Oyama M."/>
            <person name="Hata H."/>
            <person name="Watanabe M."/>
            <person name="Komatsu T."/>
            <person name="Mizushima-Sugano J."/>
            <person name="Satoh T."/>
            <person name="Shirai Y."/>
            <person name="Takahashi Y."/>
            <person name="Nakagawa K."/>
            <person name="Okumura K."/>
            <person name="Nagase T."/>
            <person name="Nomura N."/>
            <person name="Kikuchi H."/>
            <person name="Masuho Y."/>
            <person name="Yamashita R."/>
            <person name="Nakai K."/>
            <person name="Yada T."/>
            <person name="Nakamura Y."/>
            <person name="Ohara O."/>
            <person name="Isogai T."/>
            <person name="Sugano S."/>
        </authorList>
    </citation>
    <scope>NUCLEOTIDE SEQUENCE [LARGE SCALE MRNA] (ISOFORMS 3 AND 4)</scope>
    <source>
        <tissue>Testis</tissue>
    </source>
</reference>
<reference key="4">
    <citation type="journal article" date="2005" name="Nature">
        <title>Generation and annotation of the DNA sequences of human chromosomes 2 and 4.</title>
        <authorList>
            <person name="Hillier L.W."/>
            <person name="Graves T.A."/>
            <person name="Fulton R.S."/>
            <person name="Fulton L.A."/>
            <person name="Pepin K.H."/>
            <person name="Minx P."/>
            <person name="Wagner-McPherson C."/>
            <person name="Layman D."/>
            <person name="Wylie K."/>
            <person name="Sekhon M."/>
            <person name="Becker M.C."/>
            <person name="Fewell G.A."/>
            <person name="Delehaunty K.D."/>
            <person name="Miner T.L."/>
            <person name="Nash W.E."/>
            <person name="Kremitzki C."/>
            <person name="Oddy L."/>
            <person name="Du H."/>
            <person name="Sun H."/>
            <person name="Bradshaw-Cordum H."/>
            <person name="Ali J."/>
            <person name="Carter J."/>
            <person name="Cordes M."/>
            <person name="Harris A."/>
            <person name="Isak A."/>
            <person name="van Brunt A."/>
            <person name="Nguyen C."/>
            <person name="Du F."/>
            <person name="Courtney L."/>
            <person name="Kalicki J."/>
            <person name="Ozersky P."/>
            <person name="Abbott S."/>
            <person name="Armstrong J."/>
            <person name="Belter E.A."/>
            <person name="Caruso L."/>
            <person name="Cedroni M."/>
            <person name="Cotton M."/>
            <person name="Davidson T."/>
            <person name="Desai A."/>
            <person name="Elliott G."/>
            <person name="Erb T."/>
            <person name="Fronick C."/>
            <person name="Gaige T."/>
            <person name="Haakenson W."/>
            <person name="Haglund K."/>
            <person name="Holmes A."/>
            <person name="Harkins R."/>
            <person name="Kim K."/>
            <person name="Kruchowski S.S."/>
            <person name="Strong C.M."/>
            <person name="Grewal N."/>
            <person name="Goyea E."/>
            <person name="Hou S."/>
            <person name="Levy A."/>
            <person name="Martinka S."/>
            <person name="Mead K."/>
            <person name="McLellan M.D."/>
            <person name="Meyer R."/>
            <person name="Randall-Maher J."/>
            <person name="Tomlinson C."/>
            <person name="Dauphin-Kohlberg S."/>
            <person name="Kozlowicz-Reilly A."/>
            <person name="Shah N."/>
            <person name="Swearengen-Shahid S."/>
            <person name="Snider J."/>
            <person name="Strong J.T."/>
            <person name="Thompson J."/>
            <person name="Yoakum M."/>
            <person name="Leonard S."/>
            <person name="Pearman C."/>
            <person name="Trani L."/>
            <person name="Radionenko M."/>
            <person name="Waligorski J.E."/>
            <person name="Wang C."/>
            <person name="Rock S.M."/>
            <person name="Tin-Wollam A.-M."/>
            <person name="Maupin R."/>
            <person name="Latreille P."/>
            <person name="Wendl M.C."/>
            <person name="Yang S.-P."/>
            <person name="Pohl C."/>
            <person name="Wallis J.W."/>
            <person name="Spieth J."/>
            <person name="Bieri T.A."/>
            <person name="Berkowicz N."/>
            <person name="Nelson J.O."/>
            <person name="Osborne J."/>
            <person name="Ding L."/>
            <person name="Meyer R."/>
            <person name="Sabo A."/>
            <person name="Shotland Y."/>
            <person name="Sinha P."/>
            <person name="Wohldmann P.E."/>
            <person name="Cook L.L."/>
            <person name="Hickenbotham M.T."/>
            <person name="Eldred J."/>
            <person name="Williams D."/>
            <person name="Jones T.A."/>
            <person name="She X."/>
            <person name="Ciccarelli F.D."/>
            <person name="Izaurralde E."/>
            <person name="Taylor J."/>
            <person name="Schmutz J."/>
            <person name="Myers R.M."/>
            <person name="Cox D.R."/>
            <person name="Huang X."/>
            <person name="McPherson J.D."/>
            <person name="Mardis E.R."/>
            <person name="Clifton S.W."/>
            <person name="Warren W.C."/>
            <person name="Chinwalla A.T."/>
            <person name="Eddy S.R."/>
            <person name="Marra M.A."/>
            <person name="Ovcharenko I."/>
            <person name="Furey T.S."/>
            <person name="Miller W."/>
            <person name="Eichler E.E."/>
            <person name="Bork P."/>
            <person name="Suyama M."/>
            <person name="Torrents D."/>
            <person name="Waterston R.H."/>
            <person name="Wilson R.K."/>
        </authorList>
    </citation>
    <scope>NUCLEOTIDE SEQUENCE [LARGE SCALE GENOMIC DNA]</scope>
</reference>
<reference key="5">
    <citation type="submission" date="2005-09" db="EMBL/GenBank/DDBJ databases">
        <authorList>
            <person name="Mural R.J."/>
            <person name="Istrail S."/>
            <person name="Sutton G.G."/>
            <person name="Florea L."/>
            <person name="Halpern A.L."/>
            <person name="Mobarry C.M."/>
            <person name="Lippert R."/>
            <person name="Walenz B."/>
            <person name="Shatkay H."/>
            <person name="Dew I."/>
            <person name="Miller J.R."/>
            <person name="Flanigan M.J."/>
            <person name="Edwards N.J."/>
            <person name="Bolanos R."/>
            <person name="Fasulo D."/>
            <person name="Halldorsson B.V."/>
            <person name="Hannenhalli S."/>
            <person name="Turner R."/>
            <person name="Yooseph S."/>
            <person name="Lu F."/>
            <person name="Nusskern D.R."/>
            <person name="Shue B.C."/>
            <person name="Zheng X.H."/>
            <person name="Zhong F."/>
            <person name="Delcher A.L."/>
            <person name="Huson D.H."/>
            <person name="Kravitz S.A."/>
            <person name="Mouchard L."/>
            <person name="Reinert K."/>
            <person name="Remington K.A."/>
            <person name="Clark A.G."/>
            <person name="Waterman M.S."/>
            <person name="Eichler E.E."/>
            <person name="Adams M.D."/>
            <person name="Hunkapiller M.W."/>
            <person name="Myers E.W."/>
            <person name="Venter J.C."/>
        </authorList>
    </citation>
    <scope>NUCLEOTIDE SEQUENCE [LARGE SCALE GENOMIC DNA]</scope>
</reference>
<reference key="6">
    <citation type="journal article" date="2004" name="Genome Res.">
        <title>The status, quality, and expansion of the NIH full-length cDNA project: the Mammalian Gene Collection (MGC).</title>
        <authorList>
            <consortium name="The MGC Project Team"/>
        </authorList>
    </citation>
    <scope>NUCLEOTIDE SEQUENCE [LARGE SCALE MRNA] (ISOFORM 2)</scope>
</reference>
<reference key="7">
    <citation type="submission" date="2001-02" db="EMBL/GenBank/DDBJ databases">
        <title>Identification and characterization of FKSG85 which encodes a nucleotidase protein.</title>
        <authorList>
            <person name="Wang Y.-G."/>
            <person name="Gong L."/>
        </authorList>
    </citation>
    <scope>NUCLEOTIDE SEQUENCE [MRNA] OF 312-610</scope>
</reference>
<reference key="8">
    <citation type="journal article" date="2001" name="Biochim. Biophys. Acta">
        <title>Cloning of a mouse cytosolic 5'-nucleotidase-I identifies a new gene related to human autoimmune infertility-related protein.</title>
        <authorList>
            <person name="Sala-Newby G.B."/>
            <person name="Newby A.C."/>
        </authorList>
    </citation>
    <scope>NUCLEOTIDE SEQUENCE [MRNA] OF 325-601</scope>
    <scope>TISSUE SPECIFICITY</scope>
    <source>
        <tissue>Testis</tissue>
    </source>
</reference>
<evidence type="ECO:0000250" key="1"/>
<evidence type="ECO:0000250" key="2">
    <source>
        <dbReference type="UniProtKB" id="Q91YE9"/>
    </source>
</evidence>
<evidence type="ECO:0000250" key="3">
    <source>
        <dbReference type="UniProtKB" id="Q9BXI3"/>
    </source>
</evidence>
<evidence type="ECO:0000256" key="4">
    <source>
        <dbReference type="SAM" id="MobiDB-lite"/>
    </source>
</evidence>
<evidence type="ECO:0000269" key="5">
    <source>
    </source>
</evidence>
<evidence type="ECO:0000303" key="6">
    <source>
    </source>
</evidence>
<evidence type="ECO:0000303" key="7">
    <source>
    </source>
</evidence>
<evidence type="ECO:0000303" key="8">
    <source ref="1"/>
</evidence>
<evidence type="ECO:0000305" key="9"/>
<feature type="chain" id="PRO_0000144796" description="Cytosolic 5'-nucleotidase 1B">
    <location>
        <begin position="1"/>
        <end position="610"/>
    </location>
</feature>
<feature type="region of interest" description="Disordered" evidence="4">
    <location>
        <begin position="1"/>
        <end position="34"/>
    </location>
</feature>
<feature type="region of interest" description="Disordered" evidence="4">
    <location>
        <begin position="101"/>
        <end position="277"/>
    </location>
</feature>
<feature type="compositionally biased region" description="Basic and acidic residues" evidence="4">
    <location>
        <begin position="9"/>
        <end position="34"/>
    </location>
</feature>
<feature type="compositionally biased region" description="Polar residues" evidence="4">
    <location>
        <begin position="119"/>
        <end position="132"/>
    </location>
</feature>
<feature type="compositionally biased region" description="Low complexity" evidence="4">
    <location>
        <begin position="148"/>
        <end position="166"/>
    </location>
</feature>
<feature type="compositionally biased region" description="Pro residues" evidence="4">
    <location>
        <begin position="167"/>
        <end position="183"/>
    </location>
</feature>
<feature type="compositionally biased region" description="Polar residues" evidence="4">
    <location>
        <begin position="236"/>
        <end position="265"/>
    </location>
</feature>
<feature type="active site" description="Nucleophile" evidence="1">
    <location>
        <position position="467"/>
    </location>
</feature>
<feature type="splice variant" id="VSP_010202" description="In isoform 3." evidence="6">
    <location>
        <begin position="1"/>
        <end position="208"/>
    </location>
</feature>
<feature type="splice variant" id="VSP_010201" description="In isoform 2." evidence="7 8">
    <location>
        <begin position="41"/>
        <end position="100"/>
    </location>
</feature>
<feature type="splice variant" id="VSP_010203" description="In isoform 4." evidence="6">
    <original>LGSIAAYGFNKKFSS</original>
    <variation>KSLGWMS</variation>
    <location>
        <begin position="596"/>
        <end position="610"/>
    </location>
</feature>
<feature type="sequence conflict" description="In Ref. 2; AAL11910." evidence="9" ref="2">
    <original>G</original>
    <variation>R</variation>
    <location>
        <position position="173"/>
    </location>
</feature>
<feature type="sequence conflict" description="In Ref. 1; AAK39108." evidence="9" ref="1">
    <original>R</original>
    <variation>K</variation>
    <location>
        <position position="287"/>
    </location>
</feature>
<feature type="sequence conflict" description="In Ref. 1; AAK39108." evidence="9" ref="1">
    <original>S</original>
    <variation>W</variation>
    <location>
        <position position="297"/>
    </location>
</feature>
<feature type="sequence conflict" description="In Ref. 2; AAL11910." evidence="9" ref="2">
    <original>P</original>
    <variation>Q</variation>
    <location>
        <position position="351"/>
    </location>
</feature>
<feature type="sequence conflict" description="In Ref. 3; BAC04174." evidence="9" ref="3">
    <original>V</original>
    <variation>I</variation>
    <location>
        <position position="362"/>
    </location>
</feature>
<feature type="sequence conflict" description="In Ref. 8; CAC44363." evidence="9" ref="8">
    <original>L</original>
    <variation>P</variation>
    <location>
        <position position="528"/>
    </location>
</feature>
<feature type="sequence conflict" description="In Ref. 1; AAK39108." evidence="9" ref="1">
    <original>L</original>
    <variation>F</variation>
    <location>
        <position position="552"/>
    </location>
</feature>
<dbReference type="EC" id="3.1.3.5" evidence="2"/>
<dbReference type="EMBL" id="AF356185">
    <property type="protein sequence ID" value="AAK39108.1"/>
    <property type="status" value="ALT_INIT"/>
    <property type="molecule type" value="mRNA"/>
</dbReference>
<dbReference type="EMBL" id="AF417165">
    <property type="protein sequence ID" value="AAL11910.1"/>
    <property type="molecule type" value="mRNA"/>
</dbReference>
<dbReference type="EMBL" id="AK093234">
    <property type="protein sequence ID" value="BAC04103.1"/>
    <property type="status" value="ALT_INIT"/>
    <property type="molecule type" value="mRNA"/>
</dbReference>
<dbReference type="EMBL" id="AK093464">
    <property type="protein sequence ID" value="BAC04174.1"/>
    <property type="molecule type" value="mRNA"/>
</dbReference>
<dbReference type="EMBL" id="AK057444">
    <property type="protein sequence ID" value="BAB71489.1"/>
    <property type="molecule type" value="mRNA"/>
</dbReference>
<dbReference type="EMBL" id="AC079148">
    <property type="protein sequence ID" value="AAX93260.1"/>
    <property type="molecule type" value="Genomic_DNA"/>
</dbReference>
<dbReference type="EMBL" id="CH471053">
    <property type="protein sequence ID" value="EAX00853.1"/>
    <property type="molecule type" value="Genomic_DNA"/>
</dbReference>
<dbReference type="EMBL" id="BC136387">
    <property type="protein sequence ID" value="AAI36388.1"/>
    <property type="molecule type" value="mRNA"/>
</dbReference>
<dbReference type="EMBL" id="BC171761">
    <property type="protein sequence ID" value="AAI71761.1"/>
    <property type="molecule type" value="mRNA"/>
</dbReference>
<dbReference type="EMBL" id="AF352326">
    <property type="protein sequence ID" value="AAK83285.1"/>
    <property type="status" value="ALT_FRAME"/>
    <property type="molecule type" value="mRNA"/>
</dbReference>
<dbReference type="EMBL" id="AJ295254">
    <property type="protein sequence ID" value="CAC44363.1"/>
    <property type="status" value="ALT_INIT"/>
    <property type="molecule type" value="mRNA"/>
</dbReference>
<dbReference type="CCDS" id="CCDS33149.1">
    <molecule id="Q96P26-2"/>
</dbReference>
<dbReference type="CCDS" id="CCDS33150.1">
    <molecule id="Q96P26-1"/>
</dbReference>
<dbReference type="RefSeq" id="NP_001002006.1">
    <molecule id="Q96P26-1"/>
    <property type="nucleotide sequence ID" value="NM_001002006.3"/>
</dbReference>
<dbReference type="RefSeq" id="NP_001186015.1">
    <property type="nucleotide sequence ID" value="NM_001199086.1"/>
</dbReference>
<dbReference type="RefSeq" id="NP_001186016.1">
    <property type="nucleotide sequence ID" value="NM_001199087.1"/>
</dbReference>
<dbReference type="RefSeq" id="NP_001186017.1">
    <property type="nucleotide sequence ID" value="NM_001199088.1"/>
</dbReference>
<dbReference type="RefSeq" id="NP_001186033.1">
    <molecule id="Q96P26-4"/>
    <property type="nucleotide sequence ID" value="NM_001199104.1"/>
</dbReference>
<dbReference type="RefSeq" id="NP_150278.2">
    <molecule id="Q96P26-2"/>
    <property type="nucleotide sequence ID" value="NM_033253.4"/>
</dbReference>
<dbReference type="BioGRID" id="124995">
    <property type="interactions" value="4"/>
</dbReference>
<dbReference type="FunCoup" id="Q96P26">
    <property type="interactions" value="215"/>
</dbReference>
<dbReference type="STRING" id="9606.ENSP00000352904"/>
<dbReference type="DEPOD" id="NT5C1B"/>
<dbReference type="GlyGen" id="Q96P26">
    <property type="glycosylation" value="1 site"/>
</dbReference>
<dbReference type="iPTMnet" id="Q96P26"/>
<dbReference type="PhosphoSitePlus" id="Q96P26"/>
<dbReference type="BioMuta" id="NT5C1B"/>
<dbReference type="DMDM" id="47116569"/>
<dbReference type="MassIVE" id="Q96P26"/>
<dbReference type="PaxDb" id="9606-ENSP00000352904"/>
<dbReference type="PeptideAtlas" id="Q96P26"/>
<dbReference type="ProteomicsDB" id="77604">
    <molecule id="Q96P26-1"/>
</dbReference>
<dbReference type="ProteomicsDB" id="77605">
    <molecule id="Q96P26-2"/>
</dbReference>
<dbReference type="ProteomicsDB" id="77606">
    <molecule id="Q96P26-3"/>
</dbReference>
<dbReference type="ProteomicsDB" id="77607">
    <molecule id="Q96P26-4"/>
</dbReference>
<dbReference type="TopDownProteomics" id="Q96P26-3">
    <molecule id="Q96P26-3"/>
</dbReference>
<dbReference type="Antibodypedia" id="47312">
    <property type="antibodies" value="106 antibodies from 21 providers"/>
</dbReference>
<dbReference type="DNASU" id="100526794"/>
<dbReference type="Ensembl" id="ENST00000304081.9">
    <molecule id="Q96P26-2"/>
    <property type="protein sequence ID" value="ENSP00000305979.4"/>
    <property type="gene ID" value="ENSG00000185013.17"/>
</dbReference>
<dbReference type="Ensembl" id="ENST00000359846.6">
    <molecule id="Q96P26-1"/>
    <property type="protein sequence ID" value="ENSP00000352904.2"/>
    <property type="gene ID" value="ENSG00000185013.17"/>
</dbReference>
<dbReference type="GeneID" id="100526794"/>
<dbReference type="GeneID" id="93034"/>
<dbReference type="KEGG" id="hsa:100526794"/>
<dbReference type="KEGG" id="hsa:93034"/>
<dbReference type="MANE-Select" id="ENST00000304081.9">
    <molecule id="Q96P26-2"/>
    <property type="protein sequence ID" value="ENSP00000305979.4"/>
    <property type="RefSeq nucleotide sequence ID" value="NM_033253.4"/>
    <property type="RefSeq protein sequence ID" value="NP_150278.2"/>
</dbReference>
<dbReference type="UCSC" id="uc002rcz.4">
    <molecule id="Q96P26-1"/>
    <property type="organism name" value="human"/>
</dbReference>
<dbReference type="AGR" id="HGNC:17818"/>
<dbReference type="AGR" id="HGNC:38831"/>
<dbReference type="CTD" id="100526794"/>
<dbReference type="CTD" id="93034"/>
<dbReference type="DisGeNET" id="100526794"/>
<dbReference type="DisGeNET" id="93034"/>
<dbReference type="GeneCards" id="NT5C1B"/>
<dbReference type="HGNC" id="HGNC:17818">
    <property type="gene designation" value="NT5C1B"/>
</dbReference>
<dbReference type="HPA" id="ENSG00000185013">
    <property type="expression patterns" value="Tissue enriched (testis)"/>
</dbReference>
<dbReference type="MIM" id="610526">
    <property type="type" value="gene"/>
</dbReference>
<dbReference type="neXtProt" id="NX_Q96P26"/>
<dbReference type="OpenTargets" id="ENSG00000185013"/>
<dbReference type="PharmGKB" id="PA31800"/>
<dbReference type="VEuPathDB" id="HostDB:ENSG00000185013"/>
<dbReference type="eggNOG" id="ENOG502QRJF">
    <property type="taxonomic scope" value="Eukaryota"/>
</dbReference>
<dbReference type="GeneTree" id="ENSGT00390000017767"/>
<dbReference type="HOGENOM" id="CLU_035579_0_0_1"/>
<dbReference type="InParanoid" id="Q96P26"/>
<dbReference type="OMA" id="MYDNPEA"/>
<dbReference type="OrthoDB" id="9994138at2759"/>
<dbReference type="PAN-GO" id="Q96P26">
    <property type="GO annotations" value="3 GO annotations based on evolutionary models"/>
</dbReference>
<dbReference type="PhylomeDB" id="Q96P26"/>
<dbReference type="TreeFam" id="TF329831"/>
<dbReference type="PathwayCommons" id="Q96P26"/>
<dbReference type="Reactome" id="R-HSA-74259">
    <property type="pathway name" value="Purine catabolism"/>
</dbReference>
<dbReference type="SABIO-RK" id="Q96P26"/>
<dbReference type="BioGRID-ORCS" id="100526794">
    <property type="hits" value="15 hits in 643 CRISPR screens"/>
</dbReference>
<dbReference type="BioGRID-ORCS" id="93034">
    <property type="hits" value="8 hits in 1093 CRISPR screens"/>
</dbReference>
<dbReference type="CD-CODE" id="FB4E32DD">
    <property type="entry name" value="Presynaptic clusters and postsynaptic densities"/>
</dbReference>
<dbReference type="Pharos" id="Q96P26">
    <property type="development level" value="Tbio"/>
</dbReference>
<dbReference type="PRO" id="PR:Q96P26"/>
<dbReference type="Proteomes" id="UP000005640">
    <property type="component" value="Chromosome 2"/>
</dbReference>
<dbReference type="RNAct" id="Q96P26">
    <property type="molecule type" value="protein"/>
</dbReference>
<dbReference type="Bgee" id="ENSG00000185013">
    <property type="expression patterns" value="Expressed in sperm and 101 other cell types or tissues"/>
</dbReference>
<dbReference type="ExpressionAtlas" id="Q96P26">
    <property type="expression patterns" value="baseline and differential"/>
</dbReference>
<dbReference type="GO" id="GO:0005829">
    <property type="term" value="C:cytosol"/>
    <property type="evidence" value="ECO:0000318"/>
    <property type="project" value="GO_Central"/>
</dbReference>
<dbReference type="GO" id="GO:0005634">
    <property type="term" value="C:nucleus"/>
    <property type="evidence" value="ECO:0007005"/>
    <property type="project" value="UniProtKB"/>
</dbReference>
<dbReference type="GO" id="GO:0008253">
    <property type="term" value="F:5'-nucleotidase activity"/>
    <property type="evidence" value="ECO:0000250"/>
    <property type="project" value="UniProtKB"/>
</dbReference>
<dbReference type="GO" id="GO:0000287">
    <property type="term" value="F:magnesium ion binding"/>
    <property type="evidence" value="ECO:0007669"/>
    <property type="project" value="InterPro"/>
</dbReference>
<dbReference type="GO" id="GO:0000166">
    <property type="term" value="F:nucleotide binding"/>
    <property type="evidence" value="ECO:0007669"/>
    <property type="project" value="InterPro"/>
</dbReference>
<dbReference type="GO" id="GO:0046085">
    <property type="term" value="P:adenosine metabolic process"/>
    <property type="evidence" value="ECO:0000318"/>
    <property type="project" value="GO_Central"/>
</dbReference>
<dbReference type="GO" id="GO:0006195">
    <property type="term" value="P:purine nucleotide catabolic process"/>
    <property type="evidence" value="ECO:0000304"/>
    <property type="project" value="Reactome"/>
</dbReference>
<dbReference type="InterPro" id="IPR010394">
    <property type="entry name" value="5-nucleotidase"/>
</dbReference>
<dbReference type="PANTHER" id="PTHR31367">
    <property type="entry name" value="CYTOSOLIC 5'-NUCLEOTIDASE 1 FAMILY MEMBER"/>
    <property type="match status" value="1"/>
</dbReference>
<dbReference type="PANTHER" id="PTHR31367:SF0">
    <property type="entry name" value="CYTOSOLIC 5'-NUCLEOTIDASE 1B"/>
    <property type="match status" value="1"/>
</dbReference>
<dbReference type="Pfam" id="PF06189">
    <property type="entry name" value="5-nucleotidase"/>
    <property type="match status" value="1"/>
</dbReference>
<keyword id="KW-0025">Alternative splicing</keyword>
<keyword id="KW-0963">Cytoplasm</keyword>
<keyword id="KW-0378">Hydrolase</keyword>
<keyword id="KW-0460">Magnesium</keyword>
<keyword id="KW-0546">Nucleotide metabolism</keyword>
<keyword id="KW-1267">Proteomics identification</keyword>
<keyword id="KW-1185">Reference proteome</keyword>
<accession>Q96P26</accession>
<accession>B5MCR0</accession>
<accession>B7ZVX7</accession>
<accession>Q53RX2</accession>
<accession>Q8N9W3</accession>
<accession>Q8NA26</accession>
<accession>Q96DU5</accession>
<accession>Q96KE6</accession>
<accession>Q96M25</accession>
<accession>Q96SA3</accession>
<organism>
    <name type="scientific">Homo sapiens</name>
    <name type="common">Human</name>
    <dbReference type="NCBI Taxonomy" id="9606"/>
    <lineage>
        <taxon>Eukaryota</taxon>
        <taxon>Metazoa</taxon>
        <taxon>Chordata</taxon>
        <taxon>Craniata</taxon>
        <taxon>Vertebrata</taxon>
        <taxon>Euteleostomi</taxon>
        <taxon>Mammalia</taxon>
        <taxon>Eutheria</taxon>
        <taxon>Euarchontoglires</taxon>
        <taxon>Primates</taxon>
        <taxon>Haplorrhini</taxon>
        <taxon>Catarrhini</taxon>
        <taxon>Hominidae</taxon>
        <taxon>Homo</taxon>
    </lineage>
</organism>
<comment type="function">
    <text evidence="2">Catalyzes the hydrolysis of nucleotide monophosphates, releasing inorganic phosphate and the corresponding nucleoside, AMP is the major substrate.</text>
</comment>
<comment type="catalytic activity">
    <reaction evidence="2">
        <text>a ribonucleoside 5'-phosphate + H2O = a ribonucleoside + phosphate</text>
        <dbReference type="Rhea" id="RHEA:12484"/>
        <dbReference type="ChEBI" id="CHEBI:15377"/>
        <dbReference type="ChEBI" id="CHEBI:18254"/>
        <dbReference type="ChEBI" id="CHEBI:43474"/>
        <dbReference type="ChEBI" id="CHEBI:58043"/>
        <dbReference type="EC" id="3.1.3.5"/>
    </reaction>
</comment>
<comment type="catalytic activity">
    <reaction evidence="2">
        <text>AMP + H2O = adenosine + phosphate</text>
        <dbReference type="Rhea" id="RHEA:29375"/>
        <dbReference type="ChEBI" id="CHEBI:15377"/>
        <dbReference type="ChEBI" id="CHEBI:16335"/>
        <dbReference type="ChEBI" id="CHEBI:43474"/>
        <dbReference type="ChEBI" id="CHEBI:456215"/>
    </reaction>
</comment>
<comment type="cofactor">
    <cofactor evidence="3">
        <name>Mg(2+)</name>
        <dbReference type="ChEBI" id="CHEBI:18420"/>
    </cofactor>
</comment>
<comment type="activity regulation">
    <text evidence="2">Activated by ADP.</text>
</comment>
<comment type="subcellular location">
    <subcellularLocation>
        <location evidence="3">Cytoplasm</location>
    </subcellularLocation>
</comment>
<comment type="alternative products">
    <event type="alternative splicing"/>
    <isoform>
        <id>Q96P26-1</id>
        <name>1</name>
        <name>CN-Ib alpha</name>
        <sequence type="displayed"/>
    </isoform>
    <isoform>
        <id>Q96P26-2</id>
        <name>2</name>
        <sequence type="described" ref="VSP_010201"/>
    </isoform>
    <isoform>
        <id>Q96P26-3</id>
        <name>3</name>
        <sequence type="described" ref="VSP_010202"/>
    </isoform>
    <isoform>
        <id>Q96P26-4</id>
        <name>4</name>
        <sequence type="described" ref="VSP_010203"/>
    </isoform>
</comment>
<comment type="tissue specificity">
    <text evidence="5">Highly expressed in testis, placenta and pancreas. Detected at lower levels in heart, kidney, liver and lung.</text>
</comment>
<comment type="similarity">
    <text evidence="9">Belongs to the 5'-nucleotidase type 3 family.</text>
</comment>
<comment type="sequence caution" evidence="9">
    <conflict type="erroneous initiation">
        <sequence resource="EMBL-CDS" id="AAK39108"/>
    </conflict>
</comment>
<comment type="sequence caution" evidence="9">
    <conflict type="frameshift">
        <sequence resource="EMBL-CDS" id="AAK83285"/>
    </conflict>
</comment>
<comment type="sequence caution" evidence="9">
    <conflict type="erroneous initiation">
        <sequence resource="EMBL-CDS" id="BAC04103"/>
    </conflict>
</comment>
<comment type="sequence caution" evidence="9">
    <conflict type="erroneous initiation">
        <sequence resource="EMBL-CDS" id="CAC44363"/>
    </conflict>
</comment>
<sequence>MSQTSLKQKKNEPGMRSSKESLEAEKRKESDKTGVRLSNQMRRAVNPNHSLRCCPFQGHSSCRRCLCAAEGTALGPCHTIRIYIHMCLLWEQGQQITMMRGSQESSLRKTDSRGYLVRSQWSRISRSPSTKAPSIDEPRSRNTSAKLPSSSTSSRTPSTSPSLHDSSPPPLSGQPSLQPPASPQLPRSLDSRPPTPPEPDPGSRRSTKMQENPEAWAQGIVREIRQTRDSQPLEYSRTSPTEWKSSSQRRGIYPASTQLDRNSLSEQQQQQREDEDDYEAAYWASMRSFYEKNPSCSRPWPPKPKNAITIALSSCALFNMVDGRKIYEQEGLEKYMEYQLTNENVILTPGPAFRFVKALQYVNARLRDLYPDEQDLFDIVLMTNNHAQVGVRLINSVNHYGLLIDRFCLTGGKDPIGYLKAYLTNLYIAADSEKVQEAIQEGIASATMFDGAKDMAYCDTQLRVAFDGDAVLFSDESEHFTKEHGLDKFFQYDTLCESKPLAQGPLKGFLEDLGRLQKKFYAKNERLLCPIRTYLVTARSAASSGARVLKTLRRWGLEIDEALFLAGAPKSPILVKIRPHIFFDDHMFHIEGAQRLGSIAAYGFNKKFSS</sequence>
<protein>
    <recommendedName>
        <fullName>Cytosolic 5'-nucleotidase 1B</fullName>
        <shortName>cN1B</shortName>
        <ecNumber evidence="2">3.1.3.5</ecNumber>
    </recommendedName>
    <alternativeName>
        <fullName>Autoimmune infertility-related protein</fullName>
    </alternativeName>
    <alternativeName>
        <fullName>Cytosolic 5'-nucleotidase IB</fullName>
        <shortName>cN-IB</shortName>
    </alternativeName>
</protein>